<gene>
    <name type="primary">ybfI</name>
    <name type="ordered locus">b4636</name>
    <name type="ORF">b0691.1</name>
</gene>
<comment type="caution">
    <text evidence="2">Could be the product of a pseudogene.</text>
</comment>
<comment type="sequence caution" evidence="2">
    <conflict type="erroneous termination">
        <sequence resource="EMBL" id="M64495"/>
    </conflict>
    <text>Truncated C-terminus.</text>
</comment>
<comment type="sequence caution" evidence="2">
    <conflict type="erroneous termination">
        <sequence resource="EMBL" id="U00096"/>
    </conflict>
    <text>Truncated C-terminus.</text>
</comment>
<accession>P39901</accession>
<evidence type="ECO:0000255" key="1">
    <source>
        <dbReference type="PROSITE-ProRule" id="PRU01091"/>
    </source>
</evidence>
<evidence type="ECO:0000305" key="2"/>
<organism>
    <name type="scientific">Escherichia coli (strain K12)</name>
    <dbReference type="NCBI Taxonomy" id="83333"/>
    <lineage>
        <taxon>Bacteria</taxon>
        <taxon>Pseudomonadati</taxon>
        <taxon>Pseudomonadota</taxon>
        <taxon>Gammaproteobacteria</taxon>
        <taxon>Enterobacterales</taxon>
        <taxon>Enterobacteriaceae</taxon>
        <taxon>Escherichia</taxon>
    </lineage>
</organism>
<dbReference type="EMBL" id="U00096">
    <property type="status" value="NOT_ANNOTATED_CDS"/>
    <property type="molecule type" value="Genomic_DNA"/>
</dbReference>
<dbReference type="EMBL" id="M64495">
    <property type="status" value="NOT_ANNOTATED_CDS"/>
    <property type="molecule type" value="Genomic_DNA"/>
</dbReference>
<dbReference type="EMBL" id="U08369">
    <property type="status" value="NOT_ANNOTATED_CDS"/>
    <property type="molecule type" value="Genomic_DNA"/>
</dbReference>
<dbReference type="jPOST" id="P39901"/>
<dbReference type="EchoBASE" id="EB2291"/>
<dbReference type="InParanoid" id="P39901"/>
<dbReference type="Proteomes" id="UP000000625">
    <property type="component" value="Chromosome"/>
</dbReference>
<dbReference type="GO" id="GO:0003677">
    <property type="term" value="F:DNA binding"/>
    <property type="evidence" value="ECO:0007669"/>
    <property type="project" value="UniProtKB-KW"/>
</dbReference>
<dbReference type="GO" id="GO:0000160">
    <property type="term" value="P:phosphorelay signal transduction system"/>
    <property type="evidence" value="ECO:0007669"/>
    <property type="project" value="InterPro"/>
</dbReference>
<dbReference type="GO" id="GO:0006355">
    <property type="term" value="P:regulation of DNA-templated transcription"/>
    <property type="evidence" value="ECO:0007669"/>
    <property type="project" value="InterPro"/>
</dbReference>
<dbReference type="Gene3D" id="1.10.10.10">
    <property type="entry name" value="Winged helix-like DNA-binding domain superfamily/Winged helix DNA-binding domain"/>
    <property type="match status" value="1"/>
</dbReference>
<dbReference type="InterPro" id="IPR001867">
    <property type="entry name" value="OmpR/PhoB-type_DNA-bd"/>
</dbReference>
<dbReference type="InterPro" id="IPR016032">
    <property type="entry name" value="Sig_transdc_resp-reg_C-effctor"/>
</dbReference>
<dbReference type="InterPro" id="IPR036388">
    <property type="entry name" value="WH-like_DNA-bd_sf"/>
</dbReference>
<dbReference type="Pfam" id="PF00486">
    <property type="entry name" value="Trans_reg_C"/>
    <property type="match status" value="1"/>
</dbReference>
<dbReference type="SUPFAM" id="SSF46894">
    <property type="entry name" value="C-terminal effector domain of the bipartite response regulators"/>
    <property type="match status" value="1"/>
</dbReference>
<dbReference type="PROSITE" id="PS51755">
    <property type="entry name" value="OMPR_PHOB"/>
    <property type="match status" value="1"/>
</dbReference>
<name>YBFI_ECOLI</name>
<proteinExistence type="uncertain"/>
<sequence length="65" mass="7821">MIALSVCWQIVRYLCRIRQMXGLNAIEHSNYLRNYMGHLRQKLEQDPARPRHFITETGIGYRFML</sequence>
<reference key="1">
    <citation type="journal article" date="1997" name="Science">
        <title>The complete genome sequence of Escherichia coli K-12.</title>
        <authorList>
            <person name="Blattner F.R."/>
            <person name="Plunkett G. III"/>
            <person name="Bloch C.A."/>
            <person name="Perna N.T."/>
            <person name="Burland V."/>
            <person name="Riley M."/>
            <person name="Collado-Vides J."/>
            <person name="Glasner J.D."/>
            <person name="Rode C.K."/>
            <person name="Mayhew G.F."/>
            <person name="Gregor J."/>
            <person name="Davis N.W."/>
            <person name="Kirkpatrick H.A."/>
            <person name="Goeden M.A."/>
            <person name="Rose D.J."/>
            <person name="Mau B."/>
            <person name="Shao Y."/>
        </authorList>
    </citation>
    <scope>NUCLEOTIDE SEQUENCE [LARGE SCALE GENOMIC DNA]</scope>
    <source>
        <strain>K12 / MG1655 / ATCC 47076</strain>
    </source>
</reference>
<reference key="2">
    <citation type="journal article" date="1991" name="J. Biol. Chem.">
        <title>Coexistence of the genes for putrescine transport protein and ornithine decarboxylase at 16 min on Escherichia coli chromosome.</title>
        <authorList>
            <person name="Kashiwagi K."/>
            <person name="Suzuki T."/>
            <person name="Suzuki F."/>
            <person name="Furuchi T."/>
            <person name="Kobayashi H."/>
            <person name="Igarashi K."/>
        </authorList>
    </citation>
    <scope>NUCLEOTIDE SEQUENCE [GENOMIC DNA] OF 1-46</scope>
</reference>
<reference key="3">
    <citation type="journal article" date="1994" name="J. Bacteriol.">
        <title>Molecular cloning and characterization of the pgm gene encoding phosphoglucomutase of Escherichia coli.</title>
        <authorList>
            <person name="Lu M."/>
            <person name="Kleckner N."/>
        </authorList>
    </citation>
    <scope>NUCLEOTIDE SEQUENCE [GENOMIC DNA] OF 46-65</scope>
    <source>
        <strain>K12</strain>
    </source>
</reference>
<reference key="4">
    <citation type="journal article" date="1994" name="Nucleic Acids Res.">
        <title>Intrinsic and extrinsic approaches for detecting genes in a bacterial genome.</title>
        <authorList>
            <person name="Borodovsky M."/>
            <person name="Rudd K.E."/>
            <person name="Koonin E.V."/>
        </authorList>
    </citation>
    <scope>IDENTIFICATION</scope>
    <scope>CONCEPTUAL TRANSLATION</scope>
</reference>
<feature type="chain" id="PRO_0000168693" description="Putative uncharacterized protein YbfI">
    <location>
        <begin position="1"/>
        <end position="65"/>
    </location>
</feature>
<feature type="DNA-binding region" description="OmpR/PhoB-type" evidence="1">
    <location>
        <begin position="1"/>
        <end position="65"/>
    </location>
</feature>
<keyword id="KW-0238">DNA-binding</keyword>
<keyword id="KW-1185">Reference proteome</keyword>
<keyword id="KW-0804">Transcription</keyword>
<keyword id="KW-0805">Transcription regulation</keyword>
<protein>
    <recommendedName>
        <fullName>Putative uncharacterized protein YbfI</fullName>
    </recommendedName>
</protein>